<keyword id="KW-0378">Hydrolase</keyword>
<keyword id="KW-0460">Magnesium</keyword>
<keyword id="KW-0479">Metal-binding</keyword>
<reference key="1">
    <citation type="journal article" date="2006" name="BMC Genomics">
        <title>Complete genome sequence of Shigella flexneri 5b and comparison with Shigella flexneri 2a.</title>
        <authorList>
            <person name="Nie H."/>
            <person name="Yang F."/>
            <person name="Zhang X."/>
            <person name="Yang J."/>
            <person name="Chen L."/>
            <person name="Wang J."/>
            <person name="Xiong Z."/>
            <person name="Peng J."/>
            <person name="Sun L."/>
            <person name="Dong J."/>
            <person name="Xue Y."/>
            <person name="Xu X."/>
            <person name="Chen S."/>
            <person name="Yao Z."/>
            <person name="Shen Y."/>
            <person name="Jin Q."/>
        </authorList>
    </citation>
    <scope>NUCLEOTIDE SEQUENCE [LARGE SCALE GENOMIC DNA]</scope>
    <source>
        <strain>8401</strain>
    </source>
</reference>
<gene>
    <name evidence="1" type="primary">cof</name>
    <name type="ordered locus">SFV_0420</name>
</gene>
<evidence type="ECO:0000255" key="1">
    <source>
        <dbReference type="HAMAP-Rule" id="MF_01847"/>
    </source>
</evidence>
<sequence length="272" mass="30402">MARLVAFDMDGTLLMPDHHLGEKTLSTLARLRERDITLTFATGRHALEMQHILGALSLDAYLITGNGTRVHSLEGELLHRDDLPADVAELVLYQQWDTRASMHIFNDDGWFTGKESPALLQVFVYSGFRYQIIDVKKMPLGSVTKICFCGDHDDLTRLQIQLYEALGERAHLCFSATDCLEVLPVGCNKGAALTVRTQHLGLSLRDCMAFGDAMNDREMLGSVGSGFIMGNAMPQLRAELPHLPVIGHCRNQAVSHYLTHWLDYPHLPYSPE</sequence>
<accession>Q0T7D7</accession>
<proteinExistence type="inferred from homology"/>
<organism>
    <name type="scientific">Shigella flexneri serotype 5b (strain 8401)</name>
    <dbReference type="NCBI Taxonomy" id="373384"/>
    <lineage>
        <taxon>Bacteria</taxon>
        <taxon>Pseudomonadati</taxon>
        <taxon>Pseudomonadota</taxon>
        <taxon>Gammaproteobacteria</taxon>
        <taxon>Enterobacterales</taxon>
        <taxon>Enterobacteriaceae</taxon>
        <taxon>Shigella</taxon>
    </lineage>
</organism>
<dbReference type="EC" id="3.6.1.-" evidence="1"/>
<dbReference type="EMBL" id="CP000266">
    <property type="protein sequence ID" value="ABF02689.1"/>
    <property type="molecule type" value="Genomic_DNA"/>
</dbReference>
<dbReference type="RefSeq" id="WP_005053018.1">
    <property type="nucleotide sequence ID" value="NC_008258.1"/>
</dbReference>
<dbReference type="SMR" id="Q0T7D7"/>
<dbReference type="KEGG" id="sfv:SFV_0420"/>
<dbReference type="HOGENOM" id="CLU_044146_5_2_6"/>
<dbReference type="Proteomes" id="UP000000659">
    <property type="component" value="Chromosome"/>
</dbReference>
<dbReference type="GO" id="GO:0002145">
    <property type="term" value="F:4-amino-5-hydroxymethyl-2-methylpyrimidine diphosphatase activity"/>
    <property type="evidence" value="ECO:0007669"/>
    <property type="project" value="RHEA"/>
</dbReference>
<dbReference type="GO" id="GO:0000287">
    <property type="term" value="F:magnesium ion binding"/>
    <property type="evidence" value="ECO:0000250"/>
    <property type="project" value="UniProtKB"/>
</dbReference>
<dbReference type="GO" id="GO:0016791">
    <property type="term" value="F:phosphatase activity"/>
    <property type="evidence" value="ECO:0000250"/>
    <property type="project" value="UniProtKB"/>
</dbReference>
<dbReference type="CDD" id="cd07516">
    <property type="entry name" value="HAD_Pase"/>
    <property type="match status" value="1"/>
</dbReference>
<dbReference type="FunFam" id="3.30.1240.10:FF:000002">
    <property type="entry name" value="HMP-PP phosphatase"/>
    <property type="match status" value="1"/>
</dbReference>
<dbReference type="Gene3D" id="3.30.1240.10">
    <property type="match status" value="1"/>
</dbReference>
<dbReference type="Gene3D" id="3.40.50.1000">
    <property type="entry name" value="HAD superfamily/HAD-like"/>
    <property type="match status" value="1"/>
</dbReference>
<dbReference type="HAMAP" id="MF_01847">
    <property type="entry name" value="HMP_PP_phosphat"/>
    <property type="match status" value="1"/>
</dbReference>
<dbReference type="InterPro" id="IPR000150">
    <property type="entry name" value="Cof"/>
</dbReference>
<dbReference type="InterPro" id="IPR036412">
    <property type="entry name" value="HAD-like_sf"/>
</dbReference>
<dbReference type="InterPro" id="IPR006379">
    <property type="entry name" value="HAD-SF_hydro_IIB"/>
</dbReference>
<dbReference type="InterPro" id="IPR023214">
    <property type="entry name" value="HAD_sf"/>
</dbReference>
<dbReference type="InterPro" id="IPR023938">
    <property type="entry name" value="HMP-PP_phosphatase"/>
</dbReference>
<dbReference type="NCBIfam" id="TIGR00099">
    <property type="entry name" value="Cof-subfamily"/>
    <property type="match status" value="1"/>
</dbReference>
<dbReference type="NCBIfam" id="TIGR01484">
    <property type="entry name" value="HAD-SF-IIB"/>
    <property type="match status" value="1"/>
</dbReference>
<dbReference type="NCBIfam" id="NF011705">
    <property type="entry name" value="PRK15126.1"/>
    <property type="match status" value="1"/>
</dbReference>
<dbReference type="PANTHER" id="PTHR47267">
    <property type="match status" value="1"/>
</dbReference>
<dbReference type="PANTHER" id="PTHR47267:SF2">
    <property type="entry name" value="HMP-PP PHOSPHATASE"/>
    <property type="match status" value="1"/>
</dbReference>
<dbReference type="Pfam" id="PF08282">
    <property type="entry name" value="Hydrolase_3"/>
    <property type="match status" value="1"/>
</dbReference>
<dbReference type="SFLD" id="SFLDG01140">
    <property type="entry name" value="C2.B:_Phosphomannomutase_and_P"/>
    <property type="match status" value="1"/>
</dbReference>
<dbReference type="SFLD" id="SFLDS00003">
    <property type="entry name" value="Haloacid_Dehalogenase"/>
    <property type="match status" value="1"/>
</dbReference>
<dbReference type="SUPFAM" id="SSF56784">
    <property type="entry name" value="HAD-like"/>
    <property type="match status" value="1"/>
</dbReference>
<dbReference type="PROSITE" id="PS01228">
    <property type="entry name" value="COF_1"/>
    <property type="match status" value="1"/>
</dbReference>
<dbReference type="PROSITE" id="PS01229">
    <property type="entry name" value="COF_2"/>
    <property type="match status" value="1"/>
</dbReference>
<name>COF_SHIF8</name>
<comment type="function">
    <text evidence="1">Catalyzes the hydrolysis of 4-amino-2-methyl-5-hydroxymethylpyrimidine pyrophosphate (HMP-PP) to 4-amino-2-methyl-5-hydroxymethylpyrimidine phosphate (HMP-P).</text>
</comment>
<comment type="catalytic activity">
    <reaction evidence="1">
        <text>4-amino-2-methyl-5-(diphosphooxymethyl)pyrimidine + H2O = 4-amino-2-methyl-5-(phosphooxymethyl)pyrimidine + phosphate + H(+)</text>
        <dbReference type="Rhea" id="RHEA:27914"/>
        <dbReference type="ChEBI" id="CHEBI:15377"/>
        <dbReference type="ChEBI" id="CHEBI:15378"/>
        <dbReference type="ChEBI" id="CHEBI:43474"/>
        <dbReference type="ChEBI" id="CHEBI:57841"/>
        <dbReference type="ChEBI" id="CHEBI:58354"/>
    </reaction>
</comment>
<comment type="cofactor">
    <cofactor evidence="1">
        <name>Mg(2+)</name>
        <dbReference type="ChEBI" id="CHEBI:18420"/>
    </cofactor>
</comment>
<comment type="similarity">
    <text evidence="1">Belongs to the HAD-like hydrolase superfamily. Cof family.</text>
</comment>
<protein>
    <recommendedName>
        <fullName evidence="1">HMP-PP phosphatase</fullName>
        <ecNumber evidence="1">3.6.1.-</ecNumber>
    </recommendedName>
</protein>
<feature type="chain" id="PRO_0000342998" description="HMP-PP phosphatase">
    <location>
        <begin position="1"/>
        <end position="272"/>
    </location>
</feature>
<feature type="active site" description="Nucleophile" evidence="1">
    <location>
        <position position="8"/>
    </location>
</feature>
<feature type="binding site" evidence="1">
    <location>
        <position position="8"/>
    </location>
    <ligand>
        <name>Mg(2+)</name>
        <dbReference type="ChEBI" id="CHEBI:18420"/>
    </ligand>
</feature>
<feature type="binding site" evidence="1">
    <location>
        <position position="10"/>
    </location>
    <ligand>
        <name>Mg(2+)</name>
        <dbReference type="ChEBI" id="CHEBI:18420"/>
    </ligand>
</feature>
<feature type="binding site" evidence="1">
    <location>
        <position position="212"/>
    </location>
    <ligand>
        <name>Mg(2+)</name>
        <dbReference type="ChEBI" id="CHEBI:18420"/>
    </ligand>
</feature>